<name>EFP_ACIB3</name>
<comment type="function">
    <text evidence="1">Involved in peptide bond synthesis. Alleviates ribosome stalling that occurs when 3 or more consecutive Pro residues or the sequence PPG is present in a protein, possibly by augmenting the peptidyl transferase activity of the ribosome. Modification of Lys-34 is required for alleviation.</text>
</comment>
<comment type="pathway">
    <text evidence="1">Protein biosynthesis; polypeptide chain elongation.</text>
</comment>
<comment type="subcellular location">
    <subcellularLocation>
        <location evidence="1">Cytoplasm</location>
    </subcellularLocation>
</comment>
<comment type="PTM">
    <text evidence="1">May be beta-lysylated on the epsilon-amino group of Lys-34 by the combined action of EpmA and EpmB, and then hydroxylated on the C5 position of the same residue by EpmC (if this protein is present). Lysylation is critical for the stimulatory effect of EF-P on peptide-bond formation. The lysylation moiety may extend toward the peptidyltransferase center and stabilize the terminal 3-CCA end of the tRNA. Hydroxylation of the C5 position on Lys-34 may allow additional potential stabilizing hydrogen-bond interactions with the P-tRNA.</text>
</comment>
<comment type="similarity">
    <text evidence="1">Belongs to the elongation factor P family.</text>
</comment>
<accession>B7GZ38</accession>
<dbReference type="EMBL" id="CP001172">
    <property type="protein sequence ID" value="ACJ58970.1"/>
    <property type="molecule type" value="Genomic_DNA"/>
</dbReference>
<dbReference type="RefSeq" id="WP_000035083.1">
    <property type="nucleotide sequence ID" value="NZ_CP001172.1"/>
</dbReference>
<dbReference type="SMR" id="B7GZ38"/>
<dbReference type="GeneID" id="92894727"/>
<dbReference type="HOGENOM" id="CLU_074944_0_0_6"/>
<dbReference type="UniPathway" id="UPA00345"/>
<dbReference type="Proteomes" id="UP000006924">
    <property type="component" value="Chromosome"/>
</dbReference>
<dbReference type="GO" id="GO:0005737">
    <property type="term" value="C:cytoplasm"/>
    <property type="evidence" value="ECO:0007669"/>
    <property type="project" value="UniProtKB-SubCell"/>
</dbReference>
<dbReference type="GO" id="GO:0003746">
    <property type="term" value="F:translation elongation factor activity"/>
    <property type="evidence" value="ECO:0007669"/>
    <property type="project" value="UniProtKB-UniRule"/>
</dbReference>
<dbReference type="GO" id="GO:0043043">
    <property type="term" value="P:peptide biosynthetic process"/>
    <property type="evidence" value="ECO:0007669"/>
    <property type="project" value="InterPro"/>
</dbReference>
<dbReference type="CDD" id="cd04470">
    <property type="entry name" value="S1_EF-P_repeat_1"/>
    <property type="match status" value="1"/>
</dbReference>
<dbReference type="CDD" id="cd05794">
    <property type="entry name" value="S1_EF-P_repeat_2"/>
    <property type="match status" value="1"/>
</dbReference>
<dbReference type="FunFam" id="2.30.30.30:FF:000003">
    <property type="entry name" value="Elongation factor P"/>
    <property type="match status" value="1"/>
</dbReference>
<dbReference type="FunFam" id="2.40.50.140:FF:000004">
    <property type="entry name" value="Elongation factor P"/>
    <property type="match status" value="1"/>
</dbReference>
<dbReference type="FunFam" id="2.40.50.140:FF:000009">
    <property type="entry name" value="Elongation factor P"/>
    <property type="match status" value="1"/>
</dbReference>
<dbReference type="Gene3D" id="2.30.30.30">
    <property type="match status" value="1"/>
</dbReference>
<dbReference type="Gene3D" id="2.40.50.140">
    <property type="entry name" value="Nucleic acid-binding proteins"/>
    <property type="match status" value="2"/>
</dbReference>
<dbReference type="HAMAP" id="MF_00141">
    <property type="entry name" value="EF_P"/>
    <property type="match status" value="1"/>
</dbReference>
<dbReference type="InterPro" id="IPR015365">
    <property type="entry name" value="Elong-fact-P_C"/>
</dbReference>
<dbReference type="InterPro" id="IPR012340">
    <property type="entry name" value="NA-bd_OB-fold"/>
</dbReference>
<dbReference type="InterPro" id="IPR014722">
    <property type="entry name" value="Rib_uL2_dom2"/>
</dbReference>
<dbReference type="InterPro" id="IPR020599">
    <property type="entry name" value="Transl_elong_fac_P/YeiP"/>
</dbReference>
<dbReference type="InterPro" id="IPR013185">
    <property type="entry name" value="Transl_elong_KOW-like"/>
</dbReference>
<dbReference type="InterPro" id="IPR001059">
    <property type="entry name" value="Transl_elong_P/YeiP_cen"/>
</dbReference>
<dbReference type="InterPro" id="IPR011768">
    <property type="entry name" value="Transl_elongation_fac_P"/>
</dbReference>
<dbReference type="InterPro" id="IPR008991">
    <property type="entry name" value="Translation_prot_SH3-like_sf"/>
</dbReference>
<dbReference type="NCBIfam" id="TIGR00038">
    <property type="entry name" value="efp"/>
    <property type="match status" value="1"/>
</dbReference>
<dbReference type="NCBIfam" id="NF001810">
    <property type="entry name" value="PRK00529.1"/>
    <property type="match status" value="1"/>
</dbReference>
<dbReference type="PANTHER" id="PTHR30053">
    <property type="entry name" value="ELONGATION FACTOR P"/>
    <property type="match status" value="1"/>
</dbReference>
<dbReference type="PANTHER" id="PTHR30053:SF12">
    <property type="entry name" value="ELONGATION FACTOR P (EF-P) FAMILY PROTEIN"/>
    <property type="match status" value="1"/>
</dbReference>
<dbReference type="Pfam" id="PF01132">
    <property type="entry name" value="EFP"/>
    <property type="match status" value="1"/>
</dbReference>
<dbReference type="Pfam" id="PF08207">
    <property type="entry name" value="EFP_N"/>
    <property type="match status" value="1"/>
</dbReference>
<dbReference type="Pfam" id="PF09285">
    <property type="entry name" value="Elong-fact-P_C"/>
    <property type="match status" value="1"/>
</dbReference>
<dbReference type="PIRSF" id="PIRSF005901">
    <property type="entry name" value="EF-P"/>
    <property type="match status" value="1"/>
</dbReference>
<dbReference type="SMART" id="SM01185">
    <property type="entry name" value="EFP"/>
    <property type="match status" value="1"/>
</dbReference>
<dbReference type="SMART" id="SM00841">
    <property type="entry name" value="Elong-fact-P_C"/>
    <property type="match status" value="1"/>
</dbReference>
<dbReference type="SUPFAM" id="SSF50249">
    <property type="entry name" value="Nucleic acid-binding proteins"/>
    <property type="match status" value="2"/>
</dbReference>
<dbReference type="SUPFAM" id="SSF50104">
    <property type="entry name" value="Translation proteins SH3-like domain"/>
    <property type="match status" value="1"/>
</dbReference>
<sequence>MANYSTNDFKPGLKVMLDSNPCSIMENEYVKPGKGQAFNRVKLRNLKTGKVLEKTFKSGDTLEAADIVEVEMNYLYNDGEMWHFMDPESFEQIAADKTAMGDAAKWLKDDSNETCTIMLFNGVPLNVNAPNFVVLKVVETDPGVRGDTSGGGGKPAKLETGAVVRVPLFVQQEESVRVDTRTGEYLERA</sequence>
<evidence type="ECO:0000255" key="1">
    <source>
        <dbReference type="HAMAP-Rule" id="MF_00141"/>
    </source>
</evidence>
<reference key="1">
    <citation type="journal article" date="2008" name="J. Bacteriol.">
        <title>Comparative genome sequence analysis of multidrug-resistant Acinetobacter baumannii.</title>
        <authorList>
            <person name="Adams M.D."/>
            <person name="Goglin K."/>
            <person name="Molyneaux N."/>
            <person name="Hujer K.M."/>
            <person name="Lavender H."/>
            <person name="Jamison J.J."/>
            <person name="MacDonald I.J."/>
            <person name="Martin K.M."/>
            <person name="Russo T."/>
            <person name="Campagnari A.A."/>
            <person name="Hujer A.M."/>
            <person name="Bonomo R.A."/>
            <person name="Gill S.R."/>
        </authorList>
    </citation>
    <scope>NUCLEOTIDE SEQUENCE [LARGE SCALE GENOMIC DNA]</scope>
    <source>
        <strain>AB307-0294</strain>
    </source>
</reference>
<keyword id="KW-0963">Cytoplasm</keyword>
<keyword id="KW-0251">Elongation factor</keyword>
<keyword id="KW-0379">Hydroxylation</keyword>
<keyword id="KW-0648">Protein biosynthesis</keyword>
<organism>
    <name type="scientific">Acinetobacter baumannii (strain AB307-0294)</name>
    <dbReference type="NCBI Taxonomy" id="557600"/>
    <lineage>
        <taxon>Bacteria</taxon>
        <taxon>Pseudomonadati</taxon>
        <taxon>Pseudomonadota</taxon>
        <taxon>Gammaproteobacteria</taxon>
        <taxon>Moraxellales</taxon>
        <taxon>Moraxellaceae</taxon>
        <taxon>Acinetobacter</taxon>
        <taxon>Acinetobacter calcoaceticus/baumannii complex</taxon>
    </lineage>
</organism>
<proteinExistence type="inferred from homology"/>
<gene>
    <name evidence="1" type="primary">efp</name>
    <name type="ordered locus">ABBFA_001035</name>
</gene>
<feature type="chain" id="PRO_1000117880" description="Elongation factor P">
    <location>
        <begin position="1"/>
        <end position="189"/>
    </location>
</feature>
<feature type="modified residue" description="N6-(3,6-diaminohexanoyl)-5-hydroxylysine" evidence="1">
    <location>
        <position position="34"/>
    </location>
</feature>
<protein>
    <recommendedName>
        <fullName evidence="1">Elongation factor P</fullName>
        <shortName evidence="1">EF-P</shortName>
    </recommendedName>
</protein>